<name>UN13B_RAT</name>
<organism>
    <name type="scientific">Rattus norvegicus</name>
    <name type="common">Rat</name>
    <dbReference type="NCBI Taxonomy" id="10116"/>
    <lineage>
        <taxon>Eukaryota</taxon>
        <taxon>Metazoa</taxon>
        <taxon>Chordata</taxon>
        <taxon>Craniata</taxon>
        <taxon>Vertebrata</taxon>
        <taxon>Euteleostomi</taxon>
        <taxon>Mammalia</taxon>
        <taxon>Eutheria</taxon>
        <taxon>Euarchontoglires</taxon>
        <taxon>Glires</taxon>
        <taxon>Rodentia</taxon>
        <taxon>Myomorpha</taxon>
        <taxon>Muroidea</taxon>
        <taxon>Muridae</taxon>
        <taxon>Murinae</taxon>
        <taxon>Rattus</taxon>
    </lineage>
</organism>
<accession>Q62769</accession>
<accession>Q9WV40</accession>
<reference key="1">
    <citation type="journal article" date="1995" name="J. Biol. Chem.">
        <title>Mammalian homologues of Caenorhabditis elegans unc-13 gene define novel family of C2-domain proteins.</title>
        <authorList>
            <person name="Brose N."/>
            <person name="Hofmann K."/>
            <person name="Hata Y."/>
            <person name="Suedhof T.C."/>
        </authorList>
    </citation>
    <scope>NUCLEOTIDE SEQUENCE [MRNA] (ISOFORM 2)</scope>
    <scope>TISSUE SPECIFICITY</scope>
    <source>
        <tissue>Brain</tissue>
    </source>
</reference>
<reference key="2">
    <citation type="journal article" date="2001" name="Neuron">
        <title>Functional interaction of the active zone proteins Munc13-1 and RIM1 in synaptic vesicle priming.</title>
        <authorList>
            <person name="Betz A."/>
            <person name="Thakur P."/>
            <person name="Junge H.J."/>
            <person name="Ashery U."/>
            <person name="Rhee J.S."/>
            <person name="Scheuss V."/>
            <person name="Rosenmund C."/>
            <person name="Rettig J."/>
            <person name="Brose N."/>
        </authorList>
    </citation>
    <scope>NUCLEOTIDE SEQUENCE [MRNA] (ISOFORM 1)</scope>
    <scope>TISSUE SPECIFICITY</scope>
    <scope>INTERACTION WITH RIMS1</scope>
    <source>
        <strain>Sprague-Dawley</strain>
    </source>
</reference>
<reference key="3">
    <citation type="journal article" date="1998" name="Neuron">
        <title>Munc13-1 is a presynaptic phorbol ester receptor that enhances neurotransmitter release.</title>
        <authorList>
            <person name="Betz A."/>
            <person name="Ashery U."/>
            <person name="Rickmann M."/>
            <person name="Augustin I."/>
            <person name="Neher E."/>
            <person name="Suedhof T.C."/>
            <person name="Rettig J."/>
            <person name="Brose N."/>
        </authorList>
    </citation>
    <scope>SUBCELLULAR LOCATION</scope>
</reference>
<reference key="4">
    <citation type="journal article" date="1999" name="Biochem. J.">
        <title>Differential expression of two novel Munc13 proteins in rat brain.</title>
        <authorList>
            <person name="Augustin I."/>
            <person name="Betz A."/>
            <person name="Herrmann C."/>
            <person name="Jo T."/>
            <person name="Brose N."/>
        </authorList>
    </citation>
    <scope>SUBCELLULAR LOCATION</scope>
    <scope>TISSUE SPECIFICITY</scope>
    <scope>DEVELOPMENTAL STAGE</scope>
</reference>
<evidence type="ECO:0000250" key="1">
    <source>
        <dbReference type="UniProtKB" id="O14795"/>
    </source>
</evidence>
<evidence type="ECO:0000250" key="2">
    <source>
        <dbReference type="UniProtKB" id="Q9Z1N9"/>
    </source>
</evidence>
<evidence type="ECO:0000255" key="3"/>
<evidence type="ECO:0000255" key="4">
    <source>
        <dbReference type="PROSITE-ProRule" id="PRU00041"/>
    </source>
</evidence>
<evidence type="ECO:0000255" key="5">
    <source>
        <dbReference type="PROSITE-ProRule" id="PRU00226"/>
    </source>
</evidence>
<evidence type="ECO:0000255" key="6">
    <source>
        <dbReference type="PROSITE-ProRule" id="PRU00587"/>
    </source>
</evidence>
<evidence type="ECO:0000255" key="7">
    <source>
        <dbReference type="PROSITE-ProRule" id="PRU00588"/>
    </source>
</evidence>
<evidence type="ECO:0000256" key="8">
    <source>
        <dbReference type="SAM" id="MobiDB-lite"/>
    </source>
</evidence>
<evidence type="ECO:0000269" key="9">
    <source>
    </source>
</evidence>
<evidence type="ECO:0000269" key="10">
    <source>
    </source>
</evidence>
<evidence type="ECO:0000269" key="11">
    <source>
    </source>
</evidence>
<evidence type="ECO:0000303" key="12">
    <source>
    </source>
</evidence>
<evidence type="ECO:0000305" key="13"/>
<evidence type="ECO:0000312" key="14">
    <source>
        <dbReference type="RGD" id="619723"/>
    </source>
</evidence>
<feature type="chain" id="PRO_0000188577" description="Protein unc-13 homolog B">
    <location>
        <begin position="1"/>
        <end position="1622"/>
    </location>
</feature>
<feature type="domain" description="C2 1" evidence="4">
    <location>
        <begin position="1"/>
        <end position="97"/>
    </location>
</feature>
<feature type="domain" description="C2 2" evidence="4">
    <location>
        <begin position="596"/>
        <end position="720"/>
    </location>
</feature>
<feature type="domain" description="MHD1" evidence="6">
    <location>
        <begin position="1025"/>
        <end position="1168"/>
    </location>
</feature>
<feature type="domain" description="MHD2" evidence="7">
    <location>
        <begin position="1275"/>
        <end position="1417"/>
    </location>
</feature>
<feature type="domain" description="C2 3" evidence="4">
    <location>
        <begin position="1450"/>
        <end position="1577"/>
    </location>
</feature>
<feature type="zinc finger region" description="Phorbol-ester/DAG-type" evidence="5">
    <location>
        <begin position="490"/>
        <end position="540"/>
    </location>
</feature>
<feature type="region of interest" description="Disordered" evidence="8">
    <location>
        <begin position="189"/>
        <end position="280"/>
    </location>
</feature>
<feature type="region of interest" description="Disordered" evidence="8">
    <location>
        <begin position="292"/>
        <end position="357"/>
    </location>
</feature>
<feature type="coiled-coil region" evidence="3">
    <location>
        <begin position="1210"/>
        <end position="1231"/>
    </location>
</feature>
<feature type="compositionally biased region" description="Basic and acidic residues" evidence="8">
    <location>
        <begin position="196"/>
        <end position="205"/>
    </location>
</feature>
<feature type="compositionally biased region" description="Polar residues" evidence="8">
    <location>
        <begin position="206"/>
        <end position="225"/>
    </location>
</feature>
<feature type="compositionally biased region" description="Polar residues" evidence="8">
    <location>
        <begin position="238"/>
        <end position="254"/>
    </location>
</feature>
<feature type="compositionally biased region" description="Polar residues" evidence="8">
    <location>
        <begin position="266"/>
        <end position="280"/>
    </location>
</feature>
<feature type="compositionally biased region" description="Basic and acidic residues" evidence="8">
    <location>
        <begin position="292"/>
        <end position="306"/>
    </location>
</feature>
<feature type="compositionally biased region" description="Low complexity" evidence="8">
    <location>
        <begin position="307"/>
        <end position="318"/>
    </location>
</feature>
<feature type="compositionally biased region" description="Basic and acidic residues" evidence="8">
    <location>
        <begin position="324"/>
        <end position="349"/>
    </location>
</feature>
<feature type="binding site" evidence="4">
    <location>
        <position position="629"/>
    </location>
    <ligand>
        <name>Ca(2+)</name>
        <dbReference type="ChEBI" id="CHEBI:29108"/>
        <label>1</label>
    </ligand>
</feature>
<feature type="binding site" evidence="4">
    <location>
        <position position="629"/>
    </location>
    <ligand>
        <name>Ca(2+)</name>
        <dbReference type="ChEBI" id="CHEBI:29108"/>
        <label>2</label>
    </ligand>
</feature>
<feature type="binding site" evidence="4">
    <location>
        <position position="635"/>
    </location>
    <ligand>
        <name>Ca(2+)</name>
        <dbReference type="ChEBI" id="CHEBI:29108"/>
        <label>1</label>
    </ligand>
</feature>
<feature type="binding site" evidence="4">
    <location>
        <position position="681"/>
    </location>
    <ligand>
        <name>Ca(2+)</name>
        <dbReference type="ChEBI" id="CHEBI:29108"/>
        <label>1</label>
    </ligand>
</feature>
<feature type="binding site" evidence="4">
    <location>
        <position position="681"/>
    </location>
    <ligand>
        <name>Ca(2+)</name>
        <dbReference type="ChEBI" id="CHEBI:29108"/>
        <label>2</label>
    </ligand>
</feature>
<feature type="binding site" evidence="4">
    <location>
        <position position="683"/>
    </location>
    <ligand>
        <name>Ca(2+)</name>
        <dbReference type="ChEBI" id="CHEBI:29108"/>
        <label>1</label>
    </ligand>
</feature>
<feature type="binding site" evidence="4">
    <location>
        <position position="683"/>
    </location>
    <ligand>
        <name>Ca(2+)</name>
        <dbReference type="ChEBI" id="CHEBI:29108"/>
        <label>2</label>
    </ligand>
</feature>
<feature type="binding site" evidence="4">
    <location>
        <position position="700"/>
    </location>
    <ligand>
        <name>Ca(2+)</name>
        <dbReference type="ChEBI" id="CHEBI:29108"/>
        <label>2</label>
    </ligand>
</feature>
<feature type="modified residue" description="Phosphoserine" evidence="1">
    <location>
        <position position="16"/>
    </location>
</feature>
<feature type="modified residue" description="Phosphoserine" evidence="1">
    <location>
        <position position="307"/>
    </location>
</feature>
<feature type="modified residue" description="Phosphoserine" evidence="1">
    <location>
        <position position="378"/>
    </location>
</feature>
<feature type="splice variant" id="VSP_011384" description="In isoform 2." evidence="12">
    <original>MSLLCVRVKRAKFQGSPDKFNTYVTLKVQNVKSTTVAVRGDQPSWEQDFMFEISRLDLGLSVEVWNKGLIWDTMVGTVWIALKTIRQSDEEGPGEWSTLEAETLMKNDEICGTKNPTPHKILLGTRFELPFDIPEEEARYWTYKLEQINALADDNEYSSQEESQRKLLPTAAAQCRHWTYLGWGEHQTFEDPDSAVDDRDSDYRSETSNSAPPPYHTTTQPNASAHQFPMPVPLPQQLFLQGSSRDSCNDSMQSYDLDYPERRALSPTSSSRYGSSCNVSRGSSLLSELDQYHEQDDDGRERDSIHSSHSYGSLSRDGQAGLGEQEKALEVACESQKEKTGESKERDDATVCPPSDLMLHKDLTLGPQESFPEEKASSPFTQARAHWFRAVTKVRLQLQE</original>
    <variation>MKRLLRESEEEIMLTLGPSSSLSPDQVRTETVCIVKGKSTGPTGSLPEDNFPPPCCESADSTTSGERDRNLAQLGSFEQQASSQPSLACTACASGSDSRELSPASITSCSEPSERNKARPIFPRGPGQRCRHEHQEPLGDVVEYIIRELQGISRLQSEIAELQQHLNQVRGSVDEVSSCVDSVLSEIEGLHVGSSSLGKVRHGEKAQELHVERSREEAILYLYGLPEHDGESTVELVDNFLAKHLCVNGMQCNRYVREAYRAGTAPAPRPTVVKLVHPEHRDLILQKSILLQSVGVRVATREEPVWPEGCKNPPKESLSCLQQFQDHSRNHQGKPALQLETGNRRQMSGPHQMRTQNQHRELQASEHQGLSFLPKDGSAKQSDVSKLQDEVKGTSGAPQVISDPCGELSLLHQLEGSSPVLIPKEEDCGKLQIFKQDSQEHKACNVTKLQSDCNNAIKASSCLSLSGPLKAEKVNAEDRMLGGEDGLDILSPKQLEDLLADKSRRFATLNPDSAVEEVIIGPETFSNMVHIDLNEEETCTAQVLKNVFDKSSCVLGGSQEDEDVEIKFHTTKLSRAIHHFRLALQGVFQKLENNGSISPEDLESNESGSQSENSDRLLWTVSSGGAHDCSVESPASQGSESLLSVVSGGVGISVQGDQTPQAPSNFSLASNNSPLTNSLLSFPLAPGLGNETCSRPDSPNQGKLSLEQVCAETIYLNKCINNFKNVLREKRLRQKKLLQELVQTASHLSVEDIPSEGKREALQ</variation>
    <location>
        <begin position="1"/>
        <end position="400"/>
    </location>
</feature>
<dbReference type="EMBL" id="U24071">
    <property type="protein sequence ID" value="AAC52267.1"/>
    <property type="molecule type" value="mRNA"/>
</dbReference>
<dbReference type="EMBL" id="AF159706">
    <property type="protein sequence ID" value="AAD41910.1"/>
    <property type="molecule type" value="mRNA"/>
</dbReference>
<dbReference type="PIR" id="I61776">
    <property type="entry name" value="I61776"/>
</dbReference>
<dbReference type="RefSeq" id="NP_001036044.1">
    <property type="nucleotide sequence ID" value="NM_001042579.1"/>
</dbReference>
<dbReference type="RefSeq" id="NP_074053.1">
    <property type="nucleotide sequence ID" value="NM_022862.1"/>
</dbReference>
<dbReference type="SMR" id="Q62769"/>
<dbReference type="CORUM" id="Q62769"/>
<dbReference type="FunCoup" id="Q62769">
    <property type="interactions" value="676"/>
</dbReference>
<dbReference type="STRING" id="10116.ENSRNOP00000073250"/>
<dbReference type="PhosphoSitePlus" id="Q62769"/>
<dbReference type="PaxDb" id="10116-ENSRNOP00000058802"/>
<dbReference type="GeneID" id="64830"/>
<dbReference type="KEGG" id="rno:64830"/>
<dbReference type="UCSC" id="RGD:619723">
    <molecule id="Q62769-1"/>
    <property type="organism name" value="rat"/>
</dbReference>
<dbReference type="AGR" id="RGD:619723"/>
<dbReference type="CTD" id="10497"/>
<dbReference type="RGD" id="619723">
    <property type="gene designation" value="Unc13b"/>
</dbReference>
<dbReference type="eggNOG" id="KOG1011">
    <property type="taxonomic scope" value="Eukaryota"/>
</dbReference>
<dbReference type="InParanoid" id="Q62769"/>
<dbReference type="Reactome" id="R-RNO-181429">
    <property type="pathway name" value="Serotonin Neurotransmitter Release Cycle"/>
</dbReference>
<dbReference type="Reactome" id="R-RNO-181430">
    <property type="pathway name" value="Norepinephrine Neurotransmitter Release Cycle"/>
</dbReference>
<dbReference type="Reactome" id="R-RNO-210500">
    <property type="pathway name" value="Glutamate Neurotransmitter Release Cycle"/>
</dbReference>
<dbReference type="Reactome" id="R-RNO-212676">
    <property type="pathway name" value="Dopamine Neurotransmitter Release Cycle"/>
</dbReference>
<dbReference type="Reactome" id="R-RNO-264642">
    <property type="pathway name" value="Acetylcholine Neurotransmitter Release Cycle"/>
</dbReference>
<dbReference type="PRO" id="PR:Q62769"/>
<dbReference type="Proteomes" id="UP000002494">
    <property type="component" value="Unplaced"/>
</dbReference>
<dbReference type="GO" id="GO:0044305">
    <property type="term" value="C:calyx of Held"/>
    <property type="evidence" value="ECO:0000266"/>
    <property type="project" value="RGD"/>
</dbReference>
<dbReference type="GO" id="GO:0005829">
    <property type="term" value="C:cytosol"/>
    <property type="evidence" value="ECO:0000314"/>
    <property type="project" value="ParkinsonsUK-UCL"/>
</dbReference>
<dbReference type="GO" id="GO:0032009">
    <property type="term" value="C:early phagosome"/>
    <property type="evidence" value="ECO:0000266"/>
    <property type="project" value="RGD"/>
</dbReference>
<dbReference type="GO" id="GO:0098978">
    <property type="term" value="C:glutamatergic synapse"/>
    <property type="evidence" value="ECO:0000266"/>
    <property type="project" value="RGD"/>
</dbReference>
<dbReference type="GO" id="GO:0005794">
    <property type="term" value="C:Golgi apparatus"/>
    <property type="evidence" value="ECO:0000266"/>
    <property type="project" value="RGD"/>
</dbReference>
<dbReference type="GO" id="GO:0098686">
    <property type="term" value="C:hippocampal mossy fiber to CA3 synapse"/>
    <property type="evidence" value="ECO:0000266"/>
    <property type="project" value="RGD"/>
</dbReference>
<dbReference type="GO" id="GO:0016020">
    <property type="term" value="C:membrane"/>
    <property type="evidence" value="ECO:0000266"/>
    <property type="project" value="RGD"/>
</dbReference>
<dbReference type="GO" id="GO:0031594">
    <property type="term" value="C:neuromuscular junction"/>
    <property type="evidence" value="ECO:0000266"/>
    <property type="project" value="RGD"/>
</dbReference>
<dbReference type="GO" id="GO:0005886">
    <property type="term" value="C:plasma membrane"/>
    <property type="evidence" value="ECO:0000316"/>
    <property type="project" value="ParkinsonsUK-UCL"/>
</dbReference>
<dbReference type="GO" id="GO:0098793">
    <property type="term" value="C:presynapse"/>
    <property type="evidence" value="ECO:0000266"/>
    <property type="project" value="RGD"/>
</dbReference>
<dbReference type="GO" id="GO:0048786">
    <property type="term" value="C:presynaptic active zone"/>
    <property type="evidence" value="ECO:0000266"/>
    <property type="project" value="RGD"/>
</dbReference>
<dbReference type="GO" id="GO:0042734">
    <property type="term" value="C:presynaptic membrane"/>
    <property type="evidence" value="ECO:0000318"/>
    <property type="project" value="GO_Central"/>
</dbReference>
<dbReference type="GO" id="GO:0097470">
    <property type="term" value="C:ribbon synapse"/>
    <property type="evidence" value="ECO:0000266"/>
    <property type="project" value="RGD"/>
</dbReference>
<dbReference type="GO" id="GO:0097060">
    <property type="term" value="C:synaptic membrane"/>
    <property type="evidence" value="ECO:0000314"/>
    <property type="project" value="ParkinsonsUK-UCL"/>
</dbReference>
<dbReference type="GO" id="GO:0030672">
    <property type="term" value="C:synaptic vesicle membrane"/>
    <property type="evidence" value="ECO:0000318"/>
    <property type="project" value="GO_Central"/>
</dbReference>
<dbReference type="GO" id="GO:0043195">
    <property type="term" value="C:terminal bouton"/>
    <property type="evidence" value="ECO:0000316"/>
    <property type="project" value="ParkinsonsUK-UCL"/>
</dbReference>
<dbReference type="GO" id="GO:0005509">
    <property type="term" value="F:calcium ion binding"/>
    <property type="evidence" value="ECO:0007669"/>
    <property type="project" value="InterPro"/>
</dbReference>
<dbReference type="GO" id="GO:0005516">
    <property type="term" value="F:calmodulin binding"/>
    <property type="evidence" value="ECO:0000314"/>
    <property type="project" value="ParkinsonsUK-UCL"/>
</dbReference>
<dbReference type="GO" id="GO:0019992">
    <property type="term" value="F:diacylglycerol binding"/>
    <property type="evidence" value="ECO:0007669"/>
    <property type="project" value="InterPro"/>
</dbReference>
<dbReference type="GO" id="GO:0030742">
    <property type="term" value="F:GTP-dependent protein binding"/>
    <property type="evidence" value="ECO:0000266"/>
    <property type="project" value="RGD"/>
</dbReference>
<dbReference type="GO" id="GO:0005543">
    <property type="term" value="F:phospholipid binding"/>
    <property type="evidence" value="ECO:0007669"/>
    <property type="project" value="InterPro"/>
</dbReference>
<dbReference type="GO" id="GO:0019905">
    <property type="term" value="F:syntaxin binding"/>
    <property type="evidence" value="ECO:0000314"/>
    <property type="project" value="ParkinsonsUK-UCL"/>
</dbReference>
<dbReference type="GO" id="GO:0017075">
    <property type="term" value="F:syntaxin-1 binding"/>
    <property type="evidence" value="ECO:0000314"/>
    <property type="project" value="ParkinsonsUK-UCL"/>
</dbReference>
<dbReference type="GO" id="GO:0008270">
    <property type="term" value="F:zinc ion binding"/>
    <property type="evidence" value="ECO:0007669"/>
    <property type="project" value="UniProtKB-KW"/>
</dbReference>
<dbReference type="GO" id="GO:0060478">
    <property type="term" value="P:acrosomal vesicle exocytosis"/>
    <property type="evidence" value="ECO:0000266"/>
    <property type="project" value="RGD"/>
</dbReference>
<dbReference type="GO" id="GO:0071333">
    <property type="term" value="P:cellular response to glucose stimulus"/>
    <property type="evidence" value="ECO:0000315"/>
    <property type="project" value="ParkinsonsUK-UCL"/>
</dbReference>
<dbReference type="GO" id="GO:0007268">
    <property type="term" value="P:chemical synaptic transmission"/>
    <property type="evidence" value="ECO:0000250"/>
    <property type="project" value="ParkinsonsUK-UCL"/>
</dbReference>
<dbReference type="GO" id="GO:0061789">
    <property type="term" value="P:dense core granule priming"/>
    <property type="evidence" value="ECO:0000316"/>
    <property type="project" value="SynGO-UCL"/>
</dbReference>
<dbReference type="GO" id="GO:0060384">
    <property type="term" value="P:innervation"/>
    <property type="evidence" value="ECO:0000266"/>
    <property type="project" value="RGD"/>
</dbReference>
<dbReference type="GO" id="GO:0031914">
    <property type="term" value="P:negative regulation of synaptic plasticity"/>
    <property type="evidence" value="ECO:0000266"/>
    <property type="project" value="RGD"/>
</dbReference>
<dbReference type="GO" id="GO:0007528">
    <property type="term" value="P:neuromuscular junction development"/>
    <property type="evidence" value="ECO:0000266"/>
    <property type="project" value="RGD"/>
</dbReference>
<dbReference type="GO" id="GO:0099011">
    <property type="term" value="P:neuronal dense core vesicle exocytosis"/>
    <property type="evidence" value="ECO:0000250"/>
    <property type="project" value="UniProtKB"/>
</dbReference>
<dbReference type="GO" id="GO:0090382">
    <property type="term" value="P:phagosome maturation"/>
    <property type="evidence" value="ECO:0000266"/>
    <property type="project" value="RGD"/>
</dbReference>
<dbReference type="GO" id="GO:0043065">
    <property type="term" value="P:positive regulation of apoptotic process"/>
    <property type="evidence" value="ECO:0000266"/>
    <property type="project" value="RGD"/>
</dbReference>
<dbReference type="GO" id="GO:1900426">
    <property type="term" value="P:positive regulation of defense response to bacterium"/>
    <property type="evidence" value="ECO:0000266"/>
    <property type="project" value="RGD"/>
</dbReference>
<dbReference type="GO" id="GO:0045921">
    <property type="term" value="P:positive regulation of exocytosis"/>
    <property type="evidence" value="ECO:0000315"/>
    <property type="project" value="ParkinsonsUK-UCL"/>
</dbReference>
<dbReference type="GO" id="GO:0097151">
    <property type="term" value="P:positive regulation of inhibitory postsynaptic potential"/>
    <property type="evidence" value="ECO:0000316"/>
    <property type="project" value="ParkinsonsUK-UCL"/>
</dbReference>
<dbReference type="GO" id="GO:0050714">
    <property type="term" value="P:positive regulation of protein secretion"/>
    <property type="evidence" value="ECO:0000315"/>
    <property type="project" value="ParkinsonsUK-UCL"/>
</dbReference>
<dbReference type="GO" id="GO:0010808">
    <property type="term" value="P:positive regulation of synaptic vesicle priming"/>
    <property type="evidence" value="ECO:0000316"/>
    <property type="project" value="ParkinsonsUK-UCL"/>
</dbReference>
<dbReference type="GO" id="GO:0099161">
    <property type="term" value="P:regulation of presynaptic dense core granule exocytosis"/>
    <property type="evidence" value="ECO:0000314"/>
    <property type="project" value="SynGO"/>
</dbReference>
<dbReference type="GO" id="GO:0048172">
    <property type="term" value="P:regulation of short-term neuronal synaptic plasticity"/>
    <property type="evidence" value="ECO:0000266"/>
    <property type="project" value="RGD"/>
</dbReference>
<dbReference type="GO" id="GO:0061669">
    <property type="term" value="P:spontaneous neurotransmitter secretion"/>
    <property type="evidence" value="ECO:0000316"/>
    <property type="project" value="ParkinsonsUK-UCL"/>
</dbReference>
<dbReference type="GO" id="GO:0035249">
    <property type="term" value="P:synaptic transmission, glutamatergic"/>
    <property type="evidence" value="ECO:0000266"/>
    <property type="project" value="RGD"/>
</dbReference>
<dbReference type="GO" id="GO:0016081">
    <property type="term" value="P:synaptic vesicle docking"/>
    <property type="evidence" value="ECO:0000266"/>
    <property type="project" value="RGD"/>
</dbReference>
<dbReference type="GO" id="GO:0016079">
    <property type="term" value="P:synaptic vesicle exocytosis"/>
    <property type="evidence" value="ECO:0000266"/>
    <property type="project" value="RGD"/>
</dbReference>
<dbReference type="GO" id="GO:0016082">
    <property type="term" value="P:synaptic vesicle priming"/>
    <property type="evidence" value="ECO:0000315"/>
    <property type="project" value="ParkinsonsUK-UCL"/>
</dbReference>
<dbReference type="CDD" id="cd20859">
    <property type="entry name" value="C1_Munc13-2-like"/>
    <property type="match status" value="1"/>
</dbReference>
<dbReference type="CDD" id="cd08394">
    <property type="entry name" value="C2A_Munc13"/>
    <property type="match status" value="1"/>
</dbReference>
<dbReference type="CDD" id="cd04027">
    <property type="entry name" value="C2B_Munc13"/>
    <property type="match status" value="1"/>
</dbReference>
<dbReference type="CDD" id="cd08395">
    <property type="entry name" value="C2C_Munc13"/>
    <property type="match status" value="1"/>
</dbReference>
<dbReference type="FunFam" id="1.10.357.50:FF:000001">
    <property type="entry name" value="Protein unc-13 homolog B"/>
    <property type="match status" value="1"/>
</dbReference>
<dbReference type="FunFam" id="1.20.58.1100:FF:000001">
    <property type="entry name" value="Protein unc-13 homolog B"/>
    <property type="match status" value="1"/>
</dbReference>
<dbReference type="FunFam" id="2.60.40.150:FF:000002">
    <property type="entry name" value="Protein unc-13 homolog B"/>
    <property type="match status" value="1"/>
</dbReference>
<dbReference type="FunFam" id="2.60.40.150:FF:000031">
    <property type="entry name" value="Protein unc-13 homolog B"/>
    <property type="match status" value="1"/>
</dbReference>
<dbReference type="FunFam" id="3.30.60.20:FF:000001">
    <property type="entry name" value="Protein unc-13 homolog B"/>
    <property type="match status" value="1"/>
</dbReference>
<dbReference type="FunFam" id="2.60.40.150:FF:000014">
    <property type="entry name" value="protein unc-13 homolog B"/>
    <property type="match status" value="1"/>
</dbReference>
<dbReference type="Gene3D" id="1.10.357.50">
    <property type="match status" value="1"/>
</dbReference>
<dbReference type="Gene3D" id="1.20.58.1100">
    <property type="match status" value="1"/>
</dbReference>
<dbReference type="Gene3D" id="3.30.60.20">
    <property type="match status" value="1"/>
</dbReference>
<dbReference type="Gene3D" id="2.60.40.150">
    <property type="entry name" value="C2 domain"/>
    <property type="match status" value="3"/>
</dbReference>
<dbReference type="InterPro" id="IPR046349">
    <property type="entry name" value="C1-like_sf"/>
</dbReference>
<dbReference type="InterPro" id="IPR000008">
    <property type="entry name" value="C2_dom"/>
</dbReference>
<dbReference type="InterPro" id="IPR035892">
    <property type="entry name" value="C2_domain_sf"/>
</dbReference>
<dbReference type="InterPro" id="IPR010439">
    <property type="entry name" value="MUN_dom"/>
</dbReference>
<dbReference type="InterPro" id="IPR014770">
    <property type="entry name" value="Munc13_1"/>
</dbReference>
<dbReference type="InterPro" id="IPR014772">
    <property type="entry name" value="Munc13_dom-2"/>
</dbReference>
<dbReference type="InterPro" id="IPR002219">
    <property type="entry name" value="PE/DAG-bd"/>
</dbReference>
<dbReference type="InterPro" id="IPR027080">
    <property type="entry name" value="Unc-13"/>
</dbReference>
<dbReference type="InterPro" id="IPR037302">
    <property type="entry name" value="Unc-13_C2B"/>
</dbReference>
<dbReference type="PANTHER" id="PTHR10480">
    <property type="entry name" value="PROTEIN UNC-13 HOMOLOG"/>
    <property type="match status" value="1"/>
</dbReference>
<dbReference type="PANTHER" id="PTHR10480:SF8">
    <property type="entry name" value="PROTEIN UNC-13 HOMOLOG B"/>
    <property type="match status" value="1"/>
</dbReference>
<dbReference type="Pfam" id="PF00130">
    <property type="entry name" value="C1_1"/>
    <property type="match status" value="1"/>
</dbReference>
<dbReference type="Pfam" id="PF00168">
    <property type="entry name" value="C2"/>
    <property type="match status" value="3"/>
</dbReference>
<dbReference type="Pfam" id="PF06292">
    <property type="entry name" value="MUN"/>
    <property type="match status" value="1"/>
</dbReference>
<dbReference type="PRINTS" id="PR00360">
    <property type="entry name" value="C2DOMAIN"/>
</dbReference>
<dbReference type="SMART" id="SM00109">
    <property type="entry name" value="C1"/>
    <property type="match status" value="1"/>
</dbReference>
<dbReference type="SMART" id="SM00239">
    <property type="entry name" value="C2"/>
    <property type="match status" value="3"/>
</dbReference>
<dbReference type="SMART" id="SM01145">
    <property type="entry name" value="DUF1041"/>
    <property type="match status" value="1"/>
</dbReference>
<dbReference type="SUPFAM" id="SSF49562">
    <property type="entry name" value="C2 domain (Calcium/lipid-binding domain, CaLB)"/>
    <property type="match status" value="3"/>
</dbReference>
<dbReference type="SUPFAM" id="SSF57889">
    <property type="entry name" value="Cysteine-rich domain"/>
    <property type="match status" value="1"/>
</dbReference>
<dbReference type="PROSITE" id="PS50004">
    <property type="entry name" value="C2"/>
    <property type="match status" value="3"/>
</dbReference>
<dbReference type="PROSITE" id="PS51258">
    <property type="entry name" value="MHD1"/>
    <property type="match status" value="1"/>
</dbReference>
<dbReference type="PROSITE" id="PS51259">
    <property type="entry name" value="MHD2"/>
    <property type="match status" value="1"/>
</dbReference>
<dbReference type="PROSITE" id="PS00479">
    <property type="entry name" value="ZF_DAG_PE_1"/>
    <property type="match status" value="1"/>
</dbReference>
<dbReference type="PROSITE" id="PS50081">
    <property type="entry name" value="ZF_DAG_PE_2"/>
    <property type="match status" value="1"/>
</dbReference>
<comment type="function">
    <text evidence="2">Plays a role in vesicle maturation during exocytosis as a target of the diacylglycerol second messenger pathway. Is involved in neurotransmitter release by acting in synaptic vesicle priming prior to vesicle fusion and participates in the activity-depending refilling of readily releasable vesicle pool (RRP) (By similarity). Essential for synaptic vesicle maturation in a subset of excitatory/glutamatergic but not inhibitory/GABA-mediated synapses (By similarity). In collaboration with UNC13A, facilitates neuronal dense core vesicles fusion as well as controls the location and efficiency of their synaptic release (By similarity).</text>
</comment>
<comment type="cofactor">
    <cofactor evidence="4">
        <name>Ca(2+)</name>
        <dbReference type="ChEBI" id="CHEBI:29108"/>
    </cofactor>
</comment>
<comment type="subunit">
    <text evidence="9">Interacts with RIMS1.</text>
</comment>
<comment type="subcellular location">
    <subcellularLocation>
        <location>Cytoplasm</location>
    </subcellularLocation>
    <subcellularLocation>
        <location>Membrane</location>
        <topology>Peripheral membrane protein</topology>
    </subcellularLocation>
    <subcellularLocation>
        <location>Cell membrane</location>
    </subcellularLocation>
    <subcellularLocation>
        <location>Synapse</location>
    </subcellularLocation>
    <text>Localized to synapses. Translocated to the plasma membrane in response to phorbol ester binding.</text>
</comment>
<comment type="alternative products">
    <event type="alternative splicing"/>
    <isoform>
        <id>Q62769-1</id>
        <name>1</name>
        <sequence type="displayed"/>
    </isoform>
    <isoform>
        <id>Q62769-2</id>
        <name>2</name>
        <sequence type="described" ref="VSP_011384"/>
    </isoform>
</comment>
<comment type="tissue specificity">
    <text evidence="9 10 11">Isoform 1 is ubiquitously expressed. Isoform 2 is expressed in brain, predominantly in cerebral cortex, hippocampus and striatum.</text>
</comment>
<comment type="developmental stage">
    <text evidence="11">First detected at birth, after which expression level is steadily increasing until it reaches a plateau at P15.</text>
</comment>
<comment type="domain">
    <text>The C2 domains are not involved in calcium-dependent phospholipid binding.</text>
</comment>
<comment type="similarity">
    <text evidence="13">Belongs to the unc-13 family.</text>
</comment>
<sequence>MSLLCVRVKRAKFQGSPDKFNTYVTLKVQNVKSTTVAVRGDQPSWEQDFMFEISRLDLGLSVEVWNKGLIWDTMVGTVWIALKTIRQSDEEGPGEWSTLEAETLMKNDEICGTKNPTPHKILLGTRFELPFDIPEEEARYWTYKLEQINALADDNEYSSQEESQRKLLPTAAAQCRHWTYLGWGEHQTFEDPDSAVDDRDSDYRSETSNSAPPPYHTTTQPNASAHQFPMPVPLPQQLFLQGSSRDSCNDSMQSYDLDYPERRALSPTSSSRYGSSCNVSRGSSLLSELDQYHEQDDDGRERDSIHSSHSYGSLSRDGQAGLGEQEKALEVACESQKEKTGESKERDDATVCPPSDLMLHKDLTLGPQESFPEEKASSPFTQARAHWFRAVTKVRLQLQEISDDGDPSLPQWLPEGPAGGLYGIDSMPDLRRKKPLPLVSDLAMSLVQSRKAGITSAMATRTSLKDEDLKSHVYKKTLQALIYPISCTTPHNFEVWSATTPTYCYECEGLLWGLARQGMRCSECGVKCHEKCQDLLNADCLQRAAEKSSKHGAEDRTQNIIMAMKDRMKIRERNKPEIFEVIRDVFTVSKVAHVQQMKTVKQSVLDGTSKWSAKITITVVCAQGLQAKDKTGSSDPYVTVQVGKTKKRTKTIFGNLNPVWEEKFHFECHNSSDRIKVRVWDEDDDIKSRVKQRLKRESDDFLGQTIIEVRTLSGEMDVWYNLEKRTDKSAVSGAIRLQINVEIKGEEKVAPYHVQYTCLHENLFHYLTDIQGSGGVWIPDARGDDAWKVYFDETAQEIVDEFAMRYGIESIYQAMTHFACLSSKYMCPGVPAVMSTLLANINAYYAHTTASTNVSASDRFAASNFGKERFVKLLDQLHNSLRIDLSTYRNNFPAGSPERLQDLKSTVDLLTSITFFRMKVQELQSPPRASQVVKDCVKACLNSTYEYIFNNCHDLYSHQYQLQEQPLEEPGPSIRNLDFWPKLITLIVSIIEEDKNSYTPVLNQFPQELNVGKVSAEVMWHLFAQDMKYALEEHEKDRLCKSADYMNLHFKVKWLHNEYVRELPALQGQVPEYPAWFEQFVLQWLDENEDVSLEFLRGGLERDKRDGFQQTSEHALFSCSVVDVFTQLNQSFEIIRKLECPDPSILAHYMRRFAKTIGKVLIQYADILSKNFPAYCTKERLPCILMNNMQQLRVQLEKMFEAMGGKELDSEAADSLKELQVKLNTVLDELSMVFGNSFQVRIDECVRQMADILGQVRGTGNASPNARASVAQDADSVLRPLMDFLDGNLTLFATVCEKTVLKRVLKELWRVVMNTMERVIVLPPLIDQTGTQLILTAAKELSQLSKLKDHMVREETRNLTPKQCAVLDLALDTVKQYFHAGGNGLKKTFLEKSPDLQSLRYALSLYTQTTDTLIKTFVRSQTAQVHDGKGIRFTANEDIRPEKGAGVDDPVGEVSIQVDLFTHPGTGEHKVTVKVVAANDLKWQTAGMFRPFVEVTMVGPHQSDKKRKFTTKSKSNSWTPKYNETFHFLLGNEEGPEAYELQICVKDYCFAREDRVIGLAVMPLRDVAAKGSCACWCPLGRKIHMDETGMTILRILSQRSNDEVAREFVKLKSESRSIEEGS</sequence>
<protein>
    <recommendedName>
        <fullName evidence="13">Protein unc-13 homolog B</fullName>
    </recommendedName>
    <alternativeName>
        <fullName>Munc13-2</fullName>
    </alternativeName>
</protein>
<keyword id="KW-0025">Alternative splicing</keyword>
<keyword id="KW-0106">Calcium</keyword>
<keyword id="KW-1003">Cell membrane</keyword>
<keyword id="KW-0175">Coiled coil</keyword>
<keyword id="KW-0963">Cytoplasm</keyword>
<keyword id="KW-0268">Exocytosis</keyword>
<keyword id="KW-0472">Membrane</keyword>
<keyword id="KW-0479">Metal-binding</keyword>
<keyword id="KW-0597">Phosphoprotein</keyword>
<keyword id="KW-1185">Reference proteome</keyword>
<keyword id="KW-0677">Repeat</keyword>
<keyword id="KW-0770">Synapse</keyword>
<keyword id="KW-0862">Zinc</keyword>
<keyword id="KW-0863">Zinc-finger</keyword>
<gene>
    <name evidence="14" type="primary">Unc13b</name>
    <name type="synonym">Unc13h2</name>
</gene>
<proteinExistence type="evidence at protein level"/>